<dbReference type="EMBL" id="CH408031">
    <property type="protein sequence ID" value="EAQ88695.1"/>
    <property type="molecule type" value="Genomic_DNA"/>
</dbReference>
<dbReference type="RefSeq" id="XP_001221409.1">
    <property type="nucleotide sequence ID" value="XM_001221408.1"/>
</dbReference>
<dbReference type="FunCoup" id="Q2H7Q1">
    <property type="interactions" value="39"/>
</dbReference>
<dbReference type="STRING" id="306901.Q2H7Q1"/>
<dbReference type="GeneID" id="4391392"/>
<dbReference type="VEuPathDB" id="FungiDB:CHGG_05314"/>
<dbReference type="eggNOG" id="ENOG502QRVH">
    <property type="taxonomic scope" value="Eukaryota"/>
</dbReference>
<dbReference type="HOGENOM" id="CLU_050424_1_1_1"/>
<dbReference type="InParanoid" id="Q2H7Q1"/>
<dbReference type="OMA" id="TVWEVKD"/>
<dbReference type="OrthoDB" id="2189463at2759"/>
<dbReference type="Proteomes" id="UP000001056">
    <property type="component" value="Unassembled WGS sequence"/>
</dbReference>
<dbReference type="GO" id="GO:0005789">
    <property type="term" value="C:endoplasmic reticulum membrane"/>
    <property type="evidence" value="ECO:0007669"/>
    <property type="project" value="UniProtKB-SubCell"/>
</dbReference>
<dbReference type="GO" id="GO:0051082">
    <property type="term" value="F:unfolded protein binding"/>
    <property type="evidence" value="ECO:0007669"/>
    <property type="project" value="TreeGrafter"/>
</dbReference>
<dbReference type="GO" id="GO:0071555">
    <property type="term" value="P:cell wall organization"/>
    <property type="evidence" value="ECO:0007669"/>
    <property type="project" value="UniProtKB-KW"/>
</dbReference>
<dbReference type="GO" id="GO:0006457">
    <property type="term" value="P:protein folding"/>
    <property type="evidence" value="ECO:0007669"/>
    <property type="project" value="TreeGrafter"/>
</dbReference>
<dbReference type="GO" id="GO:0015031">
    <property type="term" value="P:protein transport"/>
    <property type="evidence" value="ECO:0007669"/>
    <property type="project" value="UniProtKB-KW"/>
</dbReference>
<dbReference type="InterPro" id="IPR022057">
    <property type="entry name" value="Chs7"/>
</dbReference>
<dbReference type="PANTHER" id="PTHR35329">
    <property type="entry name" value="CHITIN SYNTHASE EXPORT CHAPERONE"/>
    <property type="match status" value="1"/>
</dbReference>
<dbReference type="PANTHER" id="PTHR35329:SF2">
    <property type="entry name" value="CHITIN SYNTHASE EXPORT CHAPERONE"/>
    <property type="match status" value="1"/>
</dbReference>
<dbReference type="Pfam" id="PF12271">
    <property type="entry name" value="Chs7"/>
    <property type="match status" value="1"/>
</dbReference>
<organism>
    <name type="scientific">Chaetomium globosum (strain ATCC 6205 / CBS 148.51 / DSM 1962 / NBRC 6347 / NRRL 1970)</name>
    <name type="common">Soil fungus</name>
    <dbReference type="NCBI Taxonomy" id="306901"/>
    <lineage>
        <taxon>Eukaryota</taxon>
        <taxon>Fungi</taxon>
        <taxon>Dikarya</taxon>
        <taxon>Ascomycota</taxon>
        <taxon>Pezizomycotina</taxon>
        <taxon>Sordariomycetes</taxon>
        <taxon>Sordariomycetidae</taxon>
        <taxon>Sordariales</taxon>
        <taxon>Chaetomiaceae</taxon>
        <taxon>Chaetomium</taxon>
    </lineage>
</organism>
<evidence type="ECO:0000250" key="1"/>
<evidence type="ECO:0000255" key="2"/>
<evidence type="ECO:0000256" key="3">
    <source>
        <dbReference type="SAM" id="MobiDB-lite"/>
    </source>
</evidence>
<evidence type="ECO:0000305" key="4"/>
<sequence>MGFGDFTGLCRMAPLPLCSSVGPITSIASGVGIEPDCYARNIEVANTIIFQGAASAMHIIALVMTVVMILHVRGKFTAVGRKEITTFFYLYMLLTFLSLCVDAGVVPPGSAPYPYFVAVQAGLASATVTCLMINGFVGFQLYEDGTPLSLWMMRLCSAAAFVISFLVALATFKTWAGLGPTNTIGLFVVLYLLNAVQLFVYVVLQVLLVMRTLHDRWPLGDIAFGMFFFVAGQVILYAASAPICKAISHYLDGLFFATTCNLLAVMMVYKYWDSITKEDLEFSVGTRMNNWEVKDLLPEEDRRATVYHDDPYGQSTAYDNSYSPSPNRHSRY</sequence>
<keyword id="KW-0961">Cell wall biogenesis/degradation</keyword>
<keyword id="KW-0256">Endoplasmic reticulum</keyword>
<keyword id="KW-0472">Membrane</keyword>
<keyword id="KW-0653">Protein transport</keyword>
<keyword id="KW-1185">Reference proteome</keyword>
<keyword id="KW-0812">Transmembrane</keyword>
<keyword id="KW-1133">Transmembrane helix</keyword>
<keyword id="KW-0813">Transport</keyword>
<protein>
    <recommendedName>
        <fullName>Chitin synthase export chaperone</fullName>
    </recommendedName>
</protein>
<proteinExistence type="inferred from homology"/>
<comment type="function">
    <text evidence="1">Chaperone required for the export of the chitin synthase CHS3 from the endoplasmic reticulum.</text>
</comment>
<comment type="subunit">
    <text evidence="1">Interacts with CHS3.</text>
</comment>
<comment type="subcellular location">
    <subcellularLocation>
        <location evidence="1">Endoplasmic reticulum membrane</location>
        <topology evidence="1">Multi-pass membrane protein</topology>
    </subcellularLocation>
</comment>
<comment type="similarity">
    <text evidence="4">Belongs to the CHS7 family.</text>
</comment>
<reference key="1">
    <citation type="journal article" date="2015" name="Genome Announc.">
        <title>Draft genome sequence of the cellulolytic fungus Chaetomium globosum.</title>
        <authorList>
            <person name="Cuomo C.A."/>
            <person name="Untereiner W.A."/>
            <person name="Ma L.-J."/>
            <person name="Grabherr M."/>
            <person name="Birren B.W."/>
        </authorList>
    </citation>
    <scope>NUCLEOTIDE SEQUENCE [LARGE SCALE GENOMIC DNA]</scope>
    <source>
        <strain>ATCC 6205 / CBS 148.51 / DSM 1962 / NBRC 6347 / NRRL 1970</strain>
    </source>
</reference>
<feature type="chain" id="PRO_0000280573" description="Chitin synthase export chaperone">
    <location>
        <begin position="1"/>
        <end position="332"/>
    </location>
</feature>
<feature type="transmembrane region" description="Helical" evidence="2">
    <location>
        <begin position="52"/>
        <end position="72"/>
    </location>
</feature>
<feature type="transmembrane region" description="Helical" evidence="2">
    <location>
        <begin position="87"/>
        <end position="107"/>
    </location>
</feature>
<feature type="transmembrane region" description="Helical" evidence="2">
    <location>
        <begin position="116"/>
        <end position="136"/>
    </location>
</feature>
<feature type="transmembrane region" description="Helical" evidence="2">
    <location>
        <begin position="158"/>
        <end position="178"/>
    </location>
</feature>
<feature type="transmembrane region" description="Helical" evidence="2">
    <location>
        <begin position="184"/>
        <end position="204"/>
    </location>
</feature>
<feature type="transmembrane region" description="Helical" evidence="2">
    <location>
        <begin position="219"/>
        <end position="239"/>
    </location>
</feature>
<feature type="transmembrane region" description="Helical" evidence="2">
    <location>
        <begin position="249"/>
        <end position="269"/>
    </location>
</feature>
<feature type="region of interest" description="Disordered" evidence="3">
    <location>
        <begin position="309"/>
        <end position="332"/>
    </location>
</feature>
<feature type="compositionally biased region" description="Polar residues" evidence="3">
    <location>
        <begin position="313"/>
        <end position="332"/>
    </location>
</feature>
<accession>Q2H7Q1</accession>
<name>CHS7_CHAGB</name>
<gene>
    <name type="primary">CHS7</name>
    <name type="ORF">CHGG_05314</name>
</gene>